<organism>
    <name type="scientific">Schizosaccharomyces pombe (strain 972 / ATCC 24843)</name>
    <name type="common">Fission yeast</name>
    <dbReference type="NCBI Taxonomy" id="284812"/>
    <lineage>
        <taxon>Eukaryota</taxon>
        <taxon>Fungi</taxon>
        <taxon>Dikarya</taxon>
        <taxon>Ascomycota</taxon>
        <taxon>Taphrinomycotina</taxon>
        <taxon>Schizosaccharomycetes</taxon>
        <taxon>Schizosaccharomycetales</taxon>
        <taxon>Schizosaccharomycetaceae</taxon>
        <taxon>Schizosaccharomyces</taxon>
    </lineage>
</organism>
<keyword id="KW-0012">Acyltransferase</keyword>
<keyword id="KW-0256">Endoplasmic reticulum</keyword>
<keyword id="KW-0333">Golgi apparatus</keyword>
<keyword id="KW-1185">Reference proteome</keyword>
<keyword id="KW-0808">Transferase</keyword>
<keyword id="KW-0926">Vacuole</keyword>
<comment type="subcellular location">
    <subcellularLocation>
        <location evidence="2">Endoplasmic reticulum</location>
    </subcellularLocation>
    <subcellularLocation>
        <location evidence="2">Golgi apparatus</location>
    </subcellularLocation>
    <subcellularLocation>
        <location evidence="2">Vacuole</location>
    </subcellularLocation>
</comment>
<comment type="similarity">
    <text evidence="3">Belongs to the acetyltransferase family.</text>
</comment>
<dbReference type="EC" id="2.3.1.-"/>
<dbReference type="EMBL" id="CU329672">
    <property type="protein sequence ID" value="CAA19112.1"/>
    <property type="molecule type" value="Genomic_DNA"/>
</dbReference>
<dbReference type="PIR" id="T41383">
    <property type="entry name" value="T41383"/>
</dbReference>
<dbReference type="RefSeq" id="NP_588100.1">
    <property type="nucleotide sequence ID" value="NM_001023091.2"/>
</dbReference>
<dbReference type="SMR" id="O59806"/>
<dbReference type="BioGRID" id="276003">
    <property type="interactions" value="7"/>
</dbReference>
<dbReference type="STRING" id="284812.O59806"/>
<dbReference type="PaxDb" id="4896-SPCC550.08.1"/>
<dbReference type="EnsemblFungi" id="SPCC550.08.1">
    <property type="protein sequence ID" value="SPCC550.08.1:pep"/>
    <property type="gene ID" value="SPCC550.08"/>
</dbReference>
<dbReference type="KEGG" id="spo:2539440"/>
<dbReference type="PomBase" id="SPCC550.08"/>
<dbReference type="VEuPathDB" id="FungiDB:SPCC550.08"/>
<dbReference type="eggNOG" id="ENOG502RXZ0">
    <property type="taxonomic scope" value="Eukaryota"/>
</dbReference>
<dbReference type="HOGENOM" id="CLU_063930_0_0_1"/>
<dbReference type="InParanoid" id="O59806"/>
<dbReference type="OMA" id="VMNVMIR"/>
<dbReference type="PhylomeDB" id="O59806"/>
<dbReference type="PRO" id="PR:O59806"/>
<dbReference type="Proteomes" id="UP000002485">
    <property type="component" value="Chromosome III"/>
</dbReference>
<dbReference type="GO" id="GO:0005783">
    <property type="term" value="C:endoplasmic reticulum"/>
    <property type="evidence" value="ECO:0007005"/>
    <property type="project" value="PomBase"/>
</dbReference>
<dbReference type="GO" id="GO:0000329">
    <property type="term" value="C:fungal-type vacuole membrane"/>
    <property type="evidence" value="ECO:0007005"/>
    <property type="project" value="PomBase"/>
</dbReference>
<dbReference type="GO" id="GO:0005794">
    <property type="term" value="C:Golgi apparatus"/>
    <property type="evidence" value="ECO:0007005"/>
    <property type="project" value="PomBase"/>
</dbReference>
<dbReference type="GO" id="GO:0008080">
    <property type="term" value="F:N-acetyltransferase activity"/>
    <property type="evidence" value="ECO:0000250"/>
    <property type="project" value="PomBase"/>
</dbReference>
<dbReference type="CDD" id="cd04301">
    <property type="entry name" value="NAT_SF"/>
    <property type="match status" value="1"/>
</dbReference>
<dbReference type="Gene3D" id="3.40.630.30">
    <property type="match status" value="1"/>
</dbReference>
<dbReference type="InterPro" id="IPR016181">
    <property type="entry name" value="Acyl_CoA_acyltransferase"/>
</dbReference>
<dbReference type="InterPro" id="IPR000182">
    <property type="entry name" value="GNAT_dom"/>
</dbReference>
<dbReference type="InterPro" id="IPR052523">
    <property type="entry name" value="Trichothecene_AcTrans"/>
</dbReference>
<dbReference type="PANTHER" id="PTHR42791">
    <property type="entry name" value="GNAT FAMILY ACETYLTRANSFERASE"/>
    <property type="match status" value="1"/>
</dbReference>
<dbReference type="PANTHER" id="PTHR42791:SF1">
    <property type="entry name" value="N-ACETYLTRANSFERASE DOMAIN-CONTAINING PROTEIN"/>
    <property type="match status" value="1"/>
</dbReference>
<dbReference type="Pfam" id="PF00583">
    <property type="entry name" value="Acetyltransf_1"/>
    <property type="match status" value="1"/>
</dbReference>
<dbReference type="SUPFAM" id="SSF55729">
    <property type="entry name" value="Acyl-CoA N-acyltransferases (Nat)"/>
    <property type="match status" value="1"/>
</dbReference>
<dbReference type="PROSITE" id="PS51186">
    <property type="entry name" value="GNAT"/>
    <property type="match status" value="1"/>
</dbReference>
<gene>
    <name type="ORF">SPCC550.08</name>
</gene>
<evidence type="ECO:0000255" key="1">
    <source>
        <dbReference type="PROSITE-ProRule" id="PRU00532"/>
    </source>
</evidence>
<evidence type="ECO:0000269" key="2">
    <source>
    </source>
</evidence>
<evidence type="ECO:0000305" key="3"/>
<reference key="1">
    <citation type="journal article" date="2002" name="Nature">
        <title>The genome sequence of Schizosaccharomyces pombe.</title>
        <authorList>
            <person name="Wood V."/>
            <person name="Gwilliam R."/>
            <person name="Rajandream M.A."/>
            <person name="Lyne M.H."/>
            <person name="Lyne R."/>
            <person name="Stewart A."/>
            <person name="Sgouros J.G."/>
            <person name="Peat N."/>
            <person name="Hayles J."/>
            <person name="Baker S.G."/>
            <person name="Basham D."/>
            <person name="Bowman S."/>
            <person name="Brooks K."/>
            <person name="Brown D."/>
            <person name="Brown S."/>
            <person name="Chillingworth T."/>
            <person name="Churcher C.M."/>
            <person name="Collins M."/>
            <person name="Connor R."/>
            <person name="Cronin A."/>
            <person name="Davis P."/>
            <person name="Feltwell T."/>
            <person name="Fraser A."/>
            <person name="Gentles S."/>
            <person name="Goble A."/>
            <person name="Hamlin N."/>
            <person name="Harris D.E."/>
            <person name="Hidalgo J."/>
            <person name="Hodgson G."/>
            <person name="Holroyd S."/>
            <person name="Hornsby T."/>
            <person name="Howarth S."/>
            <person name="Huckle E.J."/>
            <person name="Hunt S."/>
            <person name="Jagels K."/>
            <person name="James K.D."/>
            <person name="Jones L."/>
            <person name="Jones M."/>
            <person name="Leather S."/>
            <person name="McDonald S."/>
            <person name="McLean J."/>
            <person name="Mooney P."/>
            <person name="Moule S."/>
            <person name="Mungall K.L."/>
            <person name="Murphy L.D."/>
            <person name="Niblett D."/>
            <person name="Odell C."/>
            <person name="Oliver K."/>
            <person name="O'Neil S."/>
            <person name="Pearson D."/>
            <person name="Quail M.A."/>
            <person name="Rabbinowitsch E."/>
            <person name="Rutherford K.M."/>
            <person name="Rutter S."/>
            <person name="Saunders D."/>
            <person name="Seeger K."/>
            <person name="Sharp S."/>
            <person name="Skelton J."/>
            <person name="Simmonds M.N."/>
            <person name="Squares R."/>
            <person name="Squares S."/>
            <person name="Stevens K."/>
            <person name="Taylor K."/>
            <person name="Taylor R.G."/>
            <person name="Tivey A."/>
            <person name="Walsh S.V."/>
            <person name="Warren T."/>
            <person name="Whitehead S."/>
            <person name="Woodward J.R."/>
            <person name="Volckaert G."/>
            <person name="Aert R."/>
            <person name="Robben J."/>
            <person name="Grymonprez B."/>
            <person name="Weltjens I."/>
            <person name="Vanstreels E."/>
            <person name="Rieger M."/>
            <person name="Schaefer M."/>
            <person name="Mueller-Auer S."/>
            <person name="Gabel C."/>
            <person name="Fuchs M."/>
            <person name="Duesterhoeft A."/>
            <person name="Fritzc C."/>
            <person name="Holzer E."/>
            <person name="Moestl D."/>
            <person name="Hilbert H."/>
            <person name="Borzym K."/>
            <person name="Langer I."/>
            <person name="Beck A."/>
            <person name="Lehrach H."/>
            <person name="Reinhardt R."/>
            <person name="Pohl T.M."/>
            <person name="Eger P."/>
            <person name="Zimmermann W."/>
            <person name="Wedler H."/>
            <person name="Wambutt R."/>
            <person name="Purnelle B."/>
            <person name="Goffeau A."/>
            <person name="Cadieu E."/>
            <person name="Dreano S."/>
            <person name="Gloux S."/>
            <person name="Lelaure V."/>
            <person name="Mottier S."/>
            <person name="Galibert F."/>
            <person name="Aves S.J."/>
            <person name="Xiang Z."/>
            <person name="Hunt C."/>
            <person name="Moore K."/>
            <person name="Hurst S.M."/>
            <person name="Lucas M."/>
            <person name="Rochet M."/>
            <person name="Gaillardin C."/>
            <person name="Tallada V.A."/>
            <person name="Garzon A."/>
            <person name="Thode G."/>
            <person name="Daga R.R."/>
            <person name="Cruzado L."/>
            <person name="Jimenez J."/>
            <person name="Sanchez M."/>
            <person name="del Rey F."/>
            <person name="Benito J."/>
            <person name="Dominguez A."/>
            <person name="Revuelta J.L."/>
            <person name="Moreno S."/>
            <person name="Armstrong J."/>
            <person name="Forsburg S.L."/>
            <person name="Cerutti L."/>
            <person name="Lowe T."/>
            <person name="McCombie W.R."/>
            <person name="Paulsen I."/>
            <person name="Potashkin J."/>
            <person name="Shpakovski G.V."/>
            <person name="Ussery D."/>
            <person name="Barrell B.G."/>
            <person name="Nurse P."/>
        </authorList>
    </citation>
    <scope>NUCLEOTIDE SEQUENCE [LARGE SCALE GENOMIC DNA]</scope>
    <source>
        <strain>972 / ATCC 24843</strain>
    </source>
</reference>
<reference key="2">
    <citation type="journal article" date="2006" name="Nat. Biotechnol.">
        <title>ORFeome cloning and global analysis of protein localization in the fission yeast Schizosaccharomyces pombe.</title>
        <authorList>
            <person name="Matsuyama A."/>
            <person name="Arai R."/>
            <person name="Yashiroda Y."/>
            <person name="Shirai A."/>
            <person name="Kamata A."/>
            <person name="Sekido S."/>
            <person name="Kobayashi Y."/>
            <person name="Hashimoto A."/>
            <person name="Hamamoto M."/>
            <person name="Hiraoka Y."/>
            <person name="Horinouchi S."/>
            <person name="Yoshida M."/>
        </authorList>
    </citation>
    <scope>SUBCELLULAR LOCATION [LARGE SCALE ANALYSIS]</scope>
</reference>
<feature type="chain" id="PRO_0000351077" description="Uncharacterized N-acetyltransferase C550.08">
    <location>
        <begin position="1"/>
        <end position="247"/>
    </location>
</feature>
<feature type="domain" description="N-acetyltransferase" evidence="1">
    <location>
        <begin position="70"/>
        <end position="205"/>
    </location>
</feature>
<name>YJV8_SCHPO</name>
<protein>
    <recommendedName>
        <fullName>Uncharacterized N-acetyltransferase C550.08</fullName>
        <ecNumber>2.3.1.-</ecNumber>
    </recommendedName>
</protein>
<proteinExistence type="inferred from homology"/>
<sequence>MAAKRVEAKDYKKAAATLVDAFFDDPVCVYLCHTTNEQQFKKLMTEMFEYIVYAHIIRGLVLEVGDFAGISLWMGPGNNMDDWYSILRSGLWRLKYKLDGEGRKRFFNEFLPILNDTKADVLKERDDHSWYLVYVGVSSKEQGKGYLRKLIEPIFNICDQEGLPIYLESSHLHNRPIYEHFGFVYQQSIYLTRDNQKVPLEIMIREPETESKAEQSAKPKAALSKTVSASIAEKVEGSLAVSSTPVC</sequence>
<accession>O59806</accession>